<protein>
    <recommendedName>
        <fullName evidence="1">Flagellar L-ring protein</fullName>
    </recommendedName>
    <alternativeName>
        <fullName evidence="1">Basal body L-ring protein</fullName>
    </alternativeName>
</protein>
<accession>C3MG28</accession>
<gene>
    <name evidence="1" type="primary">flgH</name>
    <name type="ordered locus">NGR_c02810</name>
</gene>
<keyword id="KW-0975">Bacterial flagellum</keyword>
<keyword id="KW-0998">Cell outer membrane</keyword>
<keyword id="KW-0449">Lipoprotein</keyword>
<keyword id="KW-0472">Membrane</keyword>
<keyword id="KW-0564">Palmitate</keyword>
<keyword id="KW-1185">Reference proteome</keyword>
<keyword id="KW-0732">Signal</keyword>
<evidence type="ECO:0000255" key="1">
    <source>
        <dbReference type="HAMAP-Rule" id="MF_00415"/>
    </source>
</evidence>
<reference key="1">
    <citation type="journal article" date="2009" name="Appl. Environ. Microbiol.">
        <title>Rhizobium sp. strain NGR234 possesses a remarkable number of secretion systems.</title>
        <authorList>
            <person name="Schmeisser C."/>
            <person name="Liesegang H."/>
            <person name="Krysciak D."/>
            <person name="Bakkou N."/>
            <person name="Le Quere A."/>
            <person name="Wollherr A."/>
            <person name="Heinemeyer I."/>
            <person name="Morgenstern B."/>
            <person name="Pommerening-Roeser A."/>
            <person name="Flores M."/>
            <person name="Palacios R."/>
            <person name="Brenner S."/>
            <person name="Gottschalk G."/>
            <person name="Schmitz R.A."/>
            <person name="Broughton W.J."/>
            <person name="Perret X."/>
            <person name="Strittmatter A.W."/>
            <person name="Streit W.R."/>
        </authorList>
    </citation>
    <scope>NUCLEOTIDE SEQUENCE [LARGE SCALE GENOMIC DNA]</scope>
    <source>
        <strain>NBRC 101917 / NGR234</strain>
    </source>
</reference>
<proteinExistence type="inferred from homology"/>
<comment type="function">
    <text evidence="1">Assembles around the rod to form the L-ring and probably protects the motor/basal body from shearing forces during rotation.</text>
</comment>
<comment type="subunit">
    <text evidence="1">The basal body constitutes a major portion of the flagellar organelle and consists of four rings (L,P,S, and M) mounted on a central rod.</text>
</comment>
<comment type="subcellular location">
    <subcellularLocation>
        <location evidence="1">Cell outer membrane</location>
        <topology evidence="1">Lipid-anchor</topology>
    </subcellularLocation>
    <subcellularLocation>
        <location evidence="1">Bacterial flagellum basal body</location>
    </subcellularLocation>
</comment>
<comment type="similarity">
    <text evidence="1">Belongs to the FlgH family.</text>
</comment>
<name>FLGH_SINFN</name>
<feature type="signal peptide" evidence="1">
    <location>
        <begin position="1"/>
        <end position="16"/>
    </location>
</feature>
<feature type="chain" id="PRO_1000134831" description="Flagellar L-ring protein">
    <location>
        <begin position="17"/>
        <end position="236"/>
    </location>
</feature>
<feature type="lipid moiety-binding region" description="N-palmitoyl cysteine" evidence="1">
    <location>
        <position position="17"/>
    </location>
</feature>
<feature type="lipid moiety-binding region" description="S-diacylglycerol cysteine" evidence="1">
    <location>
        <position position="17"/>
    </location>
</feature>
<organism>
    <name type="scientific">Sinorhizobium fredii (strain NBRC 101917 / NGR234)</name>
    <dbReference type="NCBI Taxonomy" id="394"/>
    <lineage>
        <taxon>Bacteria</taxon>
        <taxon>Pseudomonadati</taxon>
        <taxon>Pseudomonadota</taxon>
        <taxon>Alphaproteobacteria</taxon>
        <taxon>Hyphomicrobiales</taxon>
        <taxon>Rhizobiaceae</taxon>
        <taxon>Sinorhizobium/Ensifer group</taxon>
        <taxon>Sinorhizobium</taxon>
    </lineage>
</organism>
<dbReference type="EMBL" id="CP001389">
    <property type="protein sequence ID" value="ACP24079.1"/>
    <property type="molecule type" value="Genomic_DNA"/>
</dbReference>
<dbReference type="RefSeq" id="WP_012706864.1">
    <property type="nucleotide sequence ID" value="NC_012587.1"/>
</dbReference>
<dbReference type="RefSeq" id="YP_002824832.1">
    <property type="nucleotide sequence ID" value="NC_012587.1"/>
</dbReference>
<dbReference type="SMR" id="C3MG28"/>
<dbReference type="STRING" id="394.NGR_c02810"/>
<dbReference type="KEGG" id="rhi:NGR_c02810"/>
<dbReference type="PATRIC" id="fig|394.7.peg.3082"/>
<dbReference type="eggNOG" id="COG2063">
    <property type="taxonomic scope" value="Bacteria"/>
</dbReference>
<dbReference type="HOGENOM" id="CLU_069313_1_2_5"/>
<dbReference type="OrthoDB" id="9789227at2"/>
<dbReference type="Proteomes" id="UP000001054">
    <property type="component" value="Chromosome"/>
</dbReference>
<dbReference type="GO" id="GO:0009427">
    <property type="term" value="C:bacterial-type flagellum basal body, distal rod, L ring"/>
    <property type="evidence" value="ECO:0007669"/>
    <property type="project" value="InterPro"/>
</dbReference>
<dbReference type="GO" id="GO:0009279">
    <property type="term" value="C:cell outer membrane"/>
    <property type="evidence" value="ECO:0007669"/>
    <property type="project" value="UniProtKB-SubCell"/>
</dbReference>
<dbReference type="GO" id="GO:0003774">
    <property type="term" value="F:cytoskeletal motor activity"/>
    <property type="evidence" value="ECO:0007669"/>
    <property type="project" value="InterPro"/>
</dbReference>
<dbReference type="GO" id="GO:0071973">
    <property type="term" value="P:bacterial-type flagellum-dependent cell motility"/>
    <property type="evidence" value="ECO:0007669"/>
    <property type="project" value="InterPro"/>
</dbReference>
<dbReference type="HAMAP" id="MF_00415">
    <property type="entry name" value="FlgH"/>
    <property type="match status" value="1"/>
</dbReference>
<dbReference type="InterPro" id="IPR000527">
    <property type="entry name" value="Flag_Lring"/>
</dbReference>
<dbReference type="NCBIfam" id="NF001305">
    <property type="entry name" value="PRK00249.1-5"/>
    <property type="match status" value="1"/>
</dbReference>
<dbReference type="PANTHER" id="PTHR34933">
    <property type="entry name" value="FLAGELLAR L-RING PROTEIN"/>
    <property type="match status" value="1"/>
</dbReference>
<dbReference type="PANTHER" id="PTHR34933:SF1">
    <property type="entry name" value="FLAGELLAR L-RING PROTEIN"/>
    <property type="match status" value="1"/>
</dbReference>
<dbReference type="Pfam" id="PF02107">
    <property type="entry name" value="FlgH"/>
    <property type="match status" value="1"/>
</dbReference>
<dbReference type="PRINTS" id="PR01008">
    <property type="entry name" value="FLGLRINGFLGH"/>
</dbReference>
<dbReference type="PROSITE" id="PS51257">
    <property type="entry name" value="PROKAR_LIPOPROTEIN"/>
    <property type="match status" value="1"/>
</dbReference>
<sequence>MRMQLTAVLAASLLAGCQNQAFREIGQAPSMSPIGSGLQYTQAPQLAAYPKQPHQMTAGYSLWNDQQAALFKDARAINVGDILTVDIQIDDKASFNNETDRSRTNSSGFNLGASGESQTSDFEWSGNLKYGSNIKTEGDGKTERSEKLRLLVAAVVTGVLENGNLLISGSQEVRVNHELRILNVAGIVRPRDVDADNIISYDRIAEARISYGGRGRLMEVQQPPWGQQVVDLVSPI</sequence>